<accession>B0RYS0</accession>
<evidence type="ECO:0000255" key="1">
    <source>
        <dbReference type="HAMAP-Rule" id="MF_00074"/>
    </source>
</evidence>
<evidence type="ECO:0000305" key="2"/>
<feature type="chain" id="PRO_0000335450" description="Ribosomal RNA small subunit methyltransferase G">
    <location>
        <begin position="1"/>
        <end position="212"/>
    </location>
</feature>
<feature type="binding site" evidence="1">
    <location>
        <position position="80"/>
    </location>
    <ligand>
        <name>S-adenosyl-L-methionine</name>
        <dbReference type="ChEBI" id="CHEBI:59789"/>
    </ligand>
</feature>
<feature type="binding site" evidence="1">
    <location>
        <position position="85"/>
    </location>
    <ligand>
        <name>S-adenosyl-L-methionine</name>
        <dbReference type="ChEBI" id="CHEBI:59789"/>
    </ligand>
</feature>
<feature type="binding site" evidence="1">
    <location>
        <begin position="131"/>
        <end position="132"/>
    </location>
    <ligand>
        <name>S-adenosyl-L-methionine</name>
        <dbReference type="ChEBI" id="CHEBI:59789"/>
    </ligand>
</feature>
<feature type="binding site" evidence="1">
    <location>
        <position position="146"/>
    </location>
    <ligand>
        <name>S-adenosyl-L-methionine</name>
        <dbReference type="ChEBI" id="CHEBI:59789"/>
    </ligand>
</feature>
<protein>
    <recommendedName>
        <fullName evidence="1">Ribosomal RNA small subunit methyltransferase G</fullName>
        <ecNumber evidence="1">2.1.1.170</ecNumber>
    </recommendedName>
    <alternativeName>
        <fullName evidence="1">16S rRNA 7-methylguanosine methyltransferase</fullName>
        <shortName evidence="1">16S rRNA m7G methyltransferase</shortName>
    </alternativeName>
</protein>
<organism>
    <name type="scientific">Xanthomonas campestris pv. campestris (strain B100)</name>
    <dbReference type="NCBI Taxonomy" id="509169"/>
    <lineage>
        <taxon>Bacteria</taxon>
        <taxon>Pseudomonadati</taxon>
        <taxon>Pseudomonadota</taxon>
        <taxon>Gammaproteobacteria</taxon>
        <taxon>Lysobacterales</taxon>
        <taxon>Lysobacteraceae</taxon>
        <taxon>Xanthomonas</taxon>
    </lineage>
</organism>
<proteinExistence type="inferred from homology"/>
<comment type="function">
    <text evidence="1">Specifically methylates the N7 position of guanine in position 527 of 16S rRNA.</text>
</comment>
<comment type="catalytic activity">
    <reaction evidence="1">
        <text>guanosine(527) in 16S rRNA + S-adenosyl-L-methionine = N(7)-methylguanosine(527) in 16S rRNA + S-adenosyl-L-homocysteine</text>
        <dbReference type="Rhea" id="RHEA:42732"/>
        <dbReference type="Rhea" id="RHEA-COMP:10209"/>
        <dbReference type="Rhea" id="RHEA-COMP:10210"/>
        <dbReference type="ChEBI" id="CHEBI:57856"/>
        <dbReference type="ChEBI" id="CHEBI:59789"/>
        <dbReference type="ChEBI" id="CHEBI:74269"/>
        <dbReference type="ChEBI" id="CHEBI:74480"/>
        <dbReference type="EC" id="2.1.1.170"/>
    </reaction>
</comment>
<comment type="subcellular location">
    <subcellularLocation>
        <location evidence="1">Cytoplasm</location>
    </subcellularLocation>
</comment>
<comment type="similarity">
    <text evidence="1">Belongs to the methyltransferase superfamily. RNA methyltransferase RsmG family.</text>
</comment>
<comment type="sequence caution" evidence="2">
    <conflict type="erroneous initiation">
        <sequence resource="EMBL-CDS" id="CAP53606"/>
    </conflict>
</comment>
<sequence length="212" mass="22701">MNDAALPPDVSAALANGLQAQSLDADFAAPLLRYLTLLVRWNKTYNLTAVRDPREMVTRHLLDSLAMQPYIVSGTLADLGTGPGLPGIPLAITRPQLQVTLVESNGKKARFMREALRHLALGNARVAEARAEAVDEPAAYDHLTARALDTLAGIIAVGGHLLRPGGSLLAMKGVYPREEIAALPAGWRVGDVHPLQVPGLEGERHLVVVHKD</sequence>
<dbReference type="EC" id="2.1.1.170" evidence="1"/>
<dbReference type="EMBL" id="AM920689">
    <property type="protein sequence ID" value="CAP53606.1"/>
    <property type="status" value="ALT_INIT"/>
    <property type="molecule type" value="Genomic_DNA"/>
</dbReference>
<dbReference type="SMR" id="B0RYS0"/>
<dbReference type="KEGG" id="xca:xcc-b100_4237"/>
<dbReference type="HOGENOM" id="CLU_885518_0_0_6"/>
<dbReference type="Proteomes" id="UP000001188">
    <property type="component" value="Chromosome"/>
</dbReference>
<dbReference type="GO" id="GO:0005829">
    <property type="term" value="C:cytosol"/>
    <property type="evidence" value="ECO:0007669"/>
    <property type="project" value="TreeGrafter"/>
</dbReference>
<dbReference type="GO" id="GO:0070043">
    <property type="term" value="F:rRNA (guanine-N7-)-methyltransferase activity"/>
    <property type="evidence" value="ECO:0007669"/>
    <property type="project" value="UniProtKB-UniRule"/>
</dbReference>
<dbReference type="Gene3D" id="3.40.50.150">
    <property type="entry name" value="Vaccinia Virus protein VP39"/>
    <property type="match status" value="1"/>
</dbReference>
<dbReference type="HAMAP" id="MF_00074">
    <property type="entry name" value="16SrRNA_methyltr_G"/>
    <property type="match status" value="1"/>
</dbReference>
<dbReference type="InterPro" id="IPR003682">
    <property type="entry name" value="rRNA_ssu_MeTfrase_G"/>
</dbReference>
<dbReference type="InterPro" id="IPR029063">
    <property type="entry name" value="SAM-dependent_MTases_sf"/>
</dbReference>
<dbReference type="NCBIfam" id="TIGR00138">
    <property type="entry name" value="rsmG_gidB"/>
    <property type="match status" value="1"/>
</dbReference>
<dbReference type="PANTHER" id="PTHR31760">
    <property type="entry name" value="S-ADENOSYL-L-METHIONINE-DEPENDENT METHYLTRANSFERASES SUPERFAMILY PROTEIN"/>
    <property type="match status" value="1"/>
</dbReference>
<dbReference type="PANTHER" id="PTHR31760:SF0">
    <property type="entry name" value="S-ADENOSYL-L-METHIONINE-DEPENDENT METHYLTRANSFERASES SUPERFAMILY PROTEIN"/>
    <property type="match status" value="1"/>
</dbReference>
<dbReference type="Pfam" id="PF02527">
    <property type="entry name" value="GidB"/>
    <property type="match status" value="1"/>
</dbReference>
<dbReference type="PIRSF" id="PIRSF003078">
    <property type="entry name" value="GidB"/>
    <property type="match status" value="1"/>
</dbReference>
<dbReference type="SUPFAM" id="SSF53335">
    <property type="entry name" value="S-adenosyl-L-methionine-dependent methyltransferases"/>
    <property type="match status" value="1"/>
</dbReference>
<keyword id="KW-0963">Cytoplasm</keyword>
<keyword id="KW-0489">Methyltransferase</keyword>
<keyword id="KW-0698">rRNA processing</keyword>
<keyword id="KW-0949">S-adenosyl-L-methionine</keyword>
<keyword id="KW-0808">Transferase</keyword>
<gene>
    <name evidence="1" type="primary">rsmG</name>
    <name type="ordered locus">xcc-b100_4237</name>
</gene>
<reference key="1">
    <citation type="journal article" date="2008" name="J. Biotechnol.">
        <title>The genome of Xanthomonas campestris pv. campestris B100 and its use for the reconstruction of metabolic pathways involved in xanthan biosynthesis.</title>
        <authorList>
            <person name="Vorhoelter F.-J."/>
            <person name="Schneiker S."/>
            <person name="Goesmann A."/>
            <person name="Krause L."/>
            <person name="Bekel T."/>
            <person name="Kaiser O."/>
            <person name="Linke B."/>
            <person name="Patschkowski T."/>
            <person name="Rueckert C."/>
            <person name="Schmid J."/>
            <person name="Sidhu V.K."/>
            <person name="Sieber V."/>
            <person name="Tauch A."/>
            <person name="Watt S.A."/>
            <person name="Weisshaar B."/>
            <person name="Becker A."/>
            <person name="Niehaus K."/>
            <person name="Puehler A."/>
        </authorList>
    </citation>
    <scope>NUCLEOTIDE SEQUENCE [LARGE SCALE GENOMIC DNA]</scope>
    <source>
        <strain>B100</strain>
    </source>
</reference>
<name>RSMG_XANCB</name>